<accession>B7M0A9</accession>
<evidence type="ECO:0000255" key="1">
    <source>
        <dbReference type="HAMAP-Rule" id="MF_01372"/>
    </source>
</evidence>
<feature type="signal peptide" evidence="1">
    <location>
        <begin position="1"/>
        <end position="23"/>
    </location>
</feature>
<feature type="chain" id="PRO_1000144737" description="UPF0412 protein YaaI">
    <location>
        <begin position="24"/>
        <end position="134"/>
    </location>
</feature>
<sequence length="134" mass="14510">MKSVFTISASLAISLMLCCTAQANDHKLLGVIAMPRNETNDLALKLPVCRIVKRIQLSADHGDLQLSGASVYFKAARSASQSLNIPSEIKEGQTTDWININSDNDNKRCVSKITFSGHTVNSSDMATLKIIGDD</sequence>
<gene>
    <name evidence="1" type="primary">yaaI</name>
    <name type="ordered locus">ECIAI1_0013</name>
</gene>
<organism>
    <name type="scientific">Escherichia coli O8 (strain IAI1)</name>
    <dbReference type="NCBI Taxonomy" id="585034"/>
    <lineage>
        <taxon>Bacteria</taxon>
        <taxon>Pseudomonadati</taxon>
        <taxon>Pseudomonadota</taxon>
        <taxon>Gammaproteobacteria</taxon>
        <taxon>Enterobacterales</taxon>
        <taxon>Enterobacteriaceae</taxon>
        <taxon>Escherichia</taxon>
    </lineage>
</organism>
<reference key="1">
    <citation type="journal article" date="2009" name="PLoS Genet.">
        <title>Organised genome dynamics in the Escherichia coli species results in highly diverse adaptive paths.</title>
        <authorList>
            <person name="Touchon M."/>
            <person name="Hoede C."/>
            <person name="Tenaillon O."/>
            <person name="Barbe V."/>
            <person name="Baeriswyl S."/>
            <person name="Bidet P."/>
            <person name="Bingen E."/>
            <person name="Bonacorsi S."/>
            <person name="Bouchier C."/>
            <person name="Bouvet O."/>
            <person name="Calteau A."/>
            <person name="Chiapello H."/>
            <person name="Clermont O."/>
            <person name="Cruveiller S."/>
            <person name="Danchin A."/>
            <person name="Diard M."/>
            <person name="Dossat C."/>
            <person name="Karoui M.E."/>
            <person name="Frapy E."/>
            <person name="Garry L."/>
            <person name="Ghigo J.M."/>
            <person name="Gilles A.M."/>
            <person name="Johnson J."/>
            <person name="Le Bouguenec C."/>
            <person name="Lescat M."/>
            <person name="Mangenot S."/>
            <person name="Martinez-Jehanne V."/>
            <person name="Matic I."/>
            <person name="Nassif X."/>
            <person name="Oztas S."/>
            <person name="Petit M.A."/>
            <person name="Pichon C."/>
            <person name="Rouy Z."/>
            <person name="Ruf C.S."/>
            <person name="Schneider D."/>
            <person name="Tourret J."/>
            <person name="Vacherie B."/>
            <person name="Vallenet D."/>
            <person name="Medigue C."/>
            <person name="Rocha E.P.C."/>
            <person name="Denamur E."/>
        </authorList>
    </citation>
    <scope>NUCLEOTIDE SEQUENCE [LARGE SCALE GENOMIC DNA]</scope>
    <source>
        <strain>IAI1</strain>
    </source>
</reference>
<dbReference type="EMBL" id="CU928160">
    <property type="protein sequence ID" value="CAQ96904.1"/>
    <property type="molecule type" value="Genomic_DNA"/>
</dbReference>
<dbReference type="RefSeq" id="WP_000843568.1">
    <property type="nucleotide sequence ID" value="NC_011741.1"/>
</dbReference>
<dbReference type="KEGG" id="ecr:ECIAI1_0013"/>
<dbReference type="HOGENOM" id="CLU_158661_0_0_6"/>
<dbReference type="HAMAP" id="MF_01372">
    <property type="entry name" value="UPF0412"/>
    <property type="match status" value="1"/>
</dbReference>
<dbReference type="InterPro" id="IPR020240">
    <property type="entry name" value="UPF0412_YaaI"/>
</dbReference>
<dbReference type="NCBIfam" id="NF007541">
    <property type="entry name" value="PRK10154.1"/>
    <property type="match status" value="1"/>
</dbReference>
<dbReference type="Pfam" id="PF10807">
    <property type="entry name" value="DUF2541"/>
    <property type="match status" value="1"/>
</dbReference>
<name>YAAI_ECO8A</name>
<protein>
    <recommendedName>
        <fullName evidence="1">UPF0412 protein YaaI</fullName>
    </recommendedName>
</protein>
<keyword id="KW-0732">Signal</keyword>
<comment type="similarity">
    <text evidence="1">Belongs to the UPF0412 family.</text>
</comment>
<proteinExistence type="inferred from homology"/>